<dbReference type="EC" id="2.2.1.7" evidence="1"/>
<dbReference type="EMBL" id="CP000117">
    <property type="protein sequence ID" value="ABA24130.1"/>
    <property type="molecule type" value="Genomic_DNA"/>
</dbReference>
<dbReference type="SMR" id="Q3M4F6"/>
<dbReference type="STRING" id="240292.Ava_4532"/>
<dbReference type="KEGG" id="ava:Ava_4532"/>
<dbReference type="eggNOG" id="COG1154">
    <property type="taxonomic scope" value="Bacteria"/>
</dbReference>
<dbReference type="HOGENOM" id="CLU_009227_1_4_3"/>
<dbReference type="UniPathway" id="UPA00064">
    <property type="reaction ID" value="UER00091"/>
</dbReference>
<dbReference type="Proteomes" id="UP000002533">
    <property type="component" value="Chromosome"/>
</dbReference>
<dbReference type="GO" id="GO:0005829">
    <property type="term" value="C:cytosol"/>
    <property type="evidence" value="ECO:0007669"/>
    <property type="project" value="TreeGrafter"/>
</dbReference>
<dbReference type="GO" id="GO:0008661">
    <property type="term" value="F:1-deoxy-D-xylulose-5-phosphate synthase activity"/>
    <property type="evidence" value="ECO:0007669"/>
    <property type="project" value="UniProtKB-UniRule"/>
</dbReference>
<dbReference type="GO" id="GO:0000287">
    <property type="term" value="F:magnesium ion binding"/>
    <property type="evidence" value="ECO:0007669"/>
    <property type="project" value="UniProtKB-UniRule"/>
</dbReference>
<dbReference type="GO" id="GO:0030976">
    <property type="term" value="F:thiamine pyrophosphate binding"/>
    <property type="evidence" value="ECO:0007669"/>
    <property type="project" value="UniProtKB-UniRule"/>
</dbReference>
<dbReference type="GO" id="GO:0052865">
    <property type="term" value="P:1-deoxy-D-xylulose 5-phosphate biosynthetic process"/>
    <property type="evidence" value="ECO:0007669"/>
    <property type="project" value="UniProtKB-UniPathway"/>
</dbReference>
<dbReference type="GO" id="GO:0019288">
    <property type="term" value="P:isopentenyl diphosphate biosynthetic process, methylerythritol 4-phosphate pathway"/>
    <property type="evidence" value="ECO:0007669"/>
    <property type="project" value="TreeGrafter"/>
</dbReference>
<dbReference type="GO" id="GO:0016114">
    <property type="term" value="P:terpenoid biosynthetic process"/>
    <property type="evidence" value="ECO:0007669"/>
    <property type="project" value="UniProtKB-UniRule"/>
</dbReference>
<dbReference type="GO" id="GO:0009228">
    <property type="term" value="P:thiamine biosynthetic process"/>
    <property type="evidence" value="ECO:0007669"/>
    <property type="project" value="UniProtKB-UniRule"/>
</dbReference>
<dbReference type="CDD" id="cd02007">
    <property type="entry name" value="TPP_DXS"/>
    <property type="match status" value="1"/>
</dbReference>
<dbReference type="CDD" id="cd07033">
    <property type="entry name" value="TPP_PYR_DXS_TK_like"/>
    <property type="match status" value="1"/>
</dbReference>
<dbReference type="FunFam" id="3.40.50.920:FF:000002">
    <property type="entry name" value="1-deoxy-D-xylulose-5-phosphate synthase"/>
    <property type="match status" value="1"/>
</dbReference>
<dbReference type="FunFam" id="3.40.50.970:FF:000005">
    <property type="entry name" value="1-deoxy-D-xylulose-5-phosphate synthase"/>
    <property type="match status" value="1"/>
</dbReference>
<dbReference type="Gene3D" id="3.40.50.920">
    <property type="match status" value="1"/>
</dbReference>
<dbReference type="Gene3D" id="3.40.50.970">
    <property type="match status" value="2"/>
</dbReference>
<dbReference type="HAMAP" id="MF_00315">
    <property type="entry name" value="DXP_synth"/>
    <property type="match status" value="1"/>
</dbReference>
<dbReference type="InterPro" id="IPR005477">
    <property type="entry name" value="Dxylulose-5-P_synthase"/>
</dbReference>
<dbReference type="InterPro" id="IPR029061">
    <property type="entry name" value="THDP-binding"/>
</dbReference>
<dbReference type="InterPro" id="IPR009014">
    <property type="entry name" value="Transketo_C/PFOR_II"/>
</dbReference>
<dbReference type="InterPro" id="IPR005475">
    <property type="entry name" value="Transketolase-like_Pyr-bd"/>
</dbReference>
<dbReference type="InterPro" id="IPR020826">
    <property type="entry name" value="Transketolase_BS"/>
</dbReference>
<dbReference type="InterPro" id="IPR033248">
    <property type="entry name" value="Transketolase_C"/>
</dbReference>
<dbReference type="InterPro" id="IPR049557">
    <property type="entry name" value="Transketolase_CS"/>
</dbReference>
<dbReference type="NCBIfam" id="TIGR00204">
    <property type="entry name" value="dxs"/>
    <property type="match status" value="1"/>
</dbReference>
<dbReference type="NCBIfam" id="NF003933">
    <property type="entry name" value="PRK05444.2-2"/>
    <property type="match status" value="1"/>
</dbReference>
<dbReference type="PANTHER" id="PTHR43322">
    <property type="entry name" value="1-D-DEOXYXYLULOSE 5-PHOSPHATE SYNTHASE-RELATED"/>
    <property type="match status" value="1"/>
</dbReference>
<dbReference type="PANTHER" id="PTHR43322:SF5">
    <property type="entry name" value="1-DEOXY-D-XYLULOSE-5-PHOSPHATE SYNTHASE, CHLOROPLASTIC"/>
    <property type="match status" value="1"/>
</dbReference>
<dbReference type="Pfam" id="PF13292">
    <property type="entry name" value="DXP_synthase_N"/>
    <property type="match status" value="1"/>
</dbReference>
<dbReference type="Pfam" id="PF02779">
    <property type="entry name" value="Transket_pyr"/>
    <property type="match status" value="1"/>
</dbReference>
<dbReference type="Pfam" id="PF02780">
    <property type="entry name" value="Transketolase_C"/>
    <property type="match status" value="1"/>
</dbReference>
<dbReference type="SMART" id="SM00861">
    <property type="entry name" value="Transket_pyr"/>
    <property type="match status" value="1"/>
</dbReference>
<dbReference type="SUPFAM" id="SSF52518">
    <property type="entry name" value="Thiamin diphosphate-binding fold (THDP-binding)"/>
    <property type="match status" value="2"/>
</dbReference>
<dbReference type="SUPFAM" id="SSF52922">
    <property type="entry name" value="TK C-terminal domain-like"/>
    <property type="match status" value="1"/>
</dbReference>
<dbReference type="PROSITE" id="PS00801">
    <property type="entry name" value="TRANSKETOLASE_1"/>
    <property type="match status" value="1"/>
</dbReference>
<dbReference type="PROSITE" id="PS00802">
    <property type="entry name" value="TRANSKETOLASE_2"/>
    <property type="match status" value="1"/>
</dbReference>
<sequence>MHLSEITHPNQLHGLSIRQLQQIARQIRDKHLQTVAEFGGHLGPGLGVVELTLGLYQTLDLDRDKVIWDVGHQAYPHKLITGRYSDFHTLRQKDGIAGYLKRGENKFDHFGAGHASTSISAALGMALARDMNGEKFKAVAVIGDGALTGGMALEAINHAGHLPKTNLLVVLNDNEMSISPNVGAIPRYLNKMRLSPPVQFIKDNFEEQFKHIPFVGESLSPELGRIKEGMKRLAVPKVGAVFEELGFTYMGPVDGHNLEELIATFQQAHQIAGPVLVHVATIKGKGYELAEKDQVGYHAQTPFNLTTGKAIPSNKPKPPAYAKVFSHTLVKLAEQNPKIIGITAAMATGTGLDKLQAKLPNQYIDVGIAEQHAVTLAAGLACEGMRPVAAIYSTFLQRAYDQIIHDVCIQNLPVFFCLDRAGIVGSDGPTHQGMYDIAYLRCIPNIVMMAPKDEAEMQRMVVTGIEYTTGPIAMRFPRGNGYGVPLMEEGWEPLEIGKGEILRNGDDVLIIGYGTMVYPSMQAAEILSEHGIEATVINARFVKPLDTELIVPLAQKIGRVVTLEEGCVMGGFGSAVAEALLDADVVVPVKRIGIPDVLVEHATPDESKAELGLTSRQIAERVLQAYFQKQVSAVI</sequence>
<accession>Q3M4F6</accession>
<feature type="chain" id="PRO_0000256371" description="1-deoxy-D-xylulose-5-phosphate synthase">
    <location>
        <begin position="1"/>
        <end position="635"/>
    </location>
</feature>
<feature type="binding site" evidence="1">
    <location>
        <position position="72"/>
    </location>
    <ligand>
        <name>thiamine diphosphate</name>
        <dbReference type="ChEBI" id="CHEBI:58937"/>
    </ligand>
</feature>
<feature type="binding site" evidence="1">
    <location>
        <begin position="113"/>
        <end position="115"/>
    </location>
    <ligand>
        <name>thiamine diphosphate</name>
        <dbReference type="ChEBI" id="CHEBI:58937"/>
    </ligand>
</feature>
<feature type="binding site" evidence="1">
    <location>
        <position position="144"/>
    </location>
    <ligand>
        <name>Mg(2+)</name>
        <dbReference type="ChEBI" id="CHEBI:18420"/>
    </ligand>
</feature>
<feature type="binding site" evidence="1">
    <location>
        <begin position="145"/>
        <end position="146"/>
    </location>
    <ligand>
        <name>thiamine diphosphate</name>
        <dbReference type="ChEBI" id="CHEBI:58937"/>
    </ligand>
</feature>
<feature type="binding site" evidence="1">
    <location>
        <position position="174"/>
    </location>
    <ligand>
        <name>Mg(2+)</name>
        <dbReference type="ChEBI" id="CHEBI:18420"/>
    </ligand>
</feature>
<feature type="binding site" evidence="1">
    <location>
        <position position="174"/>
    </location>
    <ligand>
        <name>thiamine diphosphate</name>
        <dbReference type="ChEBI" id="CHEBI:58937"/>
    </ligand>
</feature>
<feature type="binding site" evidence="1">
    <location>
        <position position="287"/>
    </location>
    <ligand>
        <name>thiamine diphosphate</name>
        <dbReference type="ChEBI" id="CHEBI:58937"/>
    </ligand>
</feature>
<feature type="binding site" evidence="1">
    <location>
        <position position="370"/>
    </location>
    <ligand>
        <name>thiamine diphosphate</name>
        <dbReference type="ChEBI" id="CHEBI:58937"/>
    </ligand>
</feature>
<protein>
    <recommendedName>
        <fullName evidence="1">1-deoxy-D-xylulose-5-phosphate synthase</fullName>
        <ecNumber evidence="1">2.2.1.7</ecNumber>
    </recommendedName>
    <alternativeName>
        <fullName evidence="1">1-deoxyxylulose-5-phosphate synthase</fullName>
        <shortName evidence="1">DXP synthase</shortName>
        <shortName evidence="1">DXPS</shortName>
    </alternativeName>
</protein>
<proteinExistence type="inferred from homology"/>
<comment type="function">
    <text evidence="1">Catalyzes the acyloin condensation reaction between C atoms 2 and 3 of pyruvate and glyceraldehyde 3-phosphate to yield 1-deoxy-D-xylulose-5-phosphate (DXP).</text>
</comment>
<comment type="catalytic activity">
    <reaction evidence="1">
        <text>D-glyceraldehyde 3-phosphate + pyruvate + H(+) = 1-deoxy-D-xylulose 5-phosphate + CO2</text>
        <dbReference type="Rhea" id="RHEA:12605"/>
        <dbReference type="ChEBI" id="CHEBI:15361"/>
        <dbReference type="ChEBI" id="CHEBI:15378"/>
        <dbReference type="ChEBI" id="CHEBI:16526"/>
        <dbReference type="ChEBI" id="CHEBI:57792"/>
        <dbReference type="ChEBI" id="CHEBI:59776"/>
        <dbReference type="EC" id="2.2.1.7"/>
    </reaction>
</comment>
<comment type="cofactor">
    <cofactor evidence="1">
        <name>Mg(2+)</name>
        <dbReference type="ChEBI" id="CHEBI:18420"/>
    </cofactor>
    <text evidence="1">Binds 1 Mg(2+) ion per subunit.</text>
</comment>
<comment type="cofactor">
    <cofactor evidence="1">
        <name>thiamine diphosphate</name>
        <dbReference type="ChEBI" id="CHEBI:58937"/>
    </cofactor>
    <text evidence="1">Binds 1 thiamine pyrophosphate per subunit.</text>
</comment>
<comment type="pathway">
    <text evidence="1">Metabolic intermediate biosynthesis; 1-deoxy-D-xylulose 5-phosphate biosynthesis; 1-deoxy-D-xylulose 5-phosphate from D-glyceraldehyde 3-phosphate and pyruvate: step 1/1.</text>
</comment>
<comment type="subunit">
    <text evidence="1">Homodimer.</text>
</comment>
<comment type="similarity">
    <text evidence="1">Belongs to the transketolase family. DXPS subfamily.</text>
</comment>
<keyword id="KW-0414">Isoprene biosynthesis</keyword>
<keyword id="KW-0460">Magnesium</keyword>
<keyword id="KW-0479">Metal-binding</keyword>
<keyword id="KW-0784">Thiamine biosynthesis</keyword>
<keyword id="KW-0786">Thiamine pyrophosphate</keyword>
<keyword id="KW-0808">Transferase</keyword>
<organism>
    <name type="scientific">Trichormus variabilis (strain ATCC 29413 / PCC 7937)</name>
    <name type="common">Anabaena variabilis</name>
    <dbReference type="NCBI Taxonomy" id="240292"/>
    <lineage>
        <taxon>Bacteria</taxon>
        <taxon>Bacillati</taxon>
        <taxon>Cyanobacteriota</taxon>
        <taxon>Cyanophyceae</taxon>
        <taxon>Nostocales</taxon>
        <taxon>Nostocaceae</taxon>
        <taxon>Trichormus</taxon>
    </lineage>
</organism>
<name>DXS_TRIV2</name>
<gene>
    <name evidence="1" type="primary">dxs</name>
    <name type="ordered locus">Ava_4532</name>
</gene>
<evidence type="ECO:0000255" key="1">
    <source>
        <dbReference type="HAMAP-Rule" id="MF_00315"/>
    </source>
</evidence>
<reference key="1">
    <citation type="journal article" date="2014" name="Stand. Genomic Sci.">
        <title>Complete genome sequence of Anabaena variabilis ATCC 29413.</title>
        <authorList>
            <person name="Thiel T."/>
            <person name="Pratte B.S."/>
            <person name="Zhong J."/>
            <person name="Goodwin L."/>
            <person name="Copeland A."/>
            <person name="Lucas S."/>
            <person name="Han C."/>
            <person name="Pitluck S."/>
            <person name="Land M.L."/>
            <person name="Kyrpides N.C."/>
            <person name="Woyke T."/>
        </authorList>
    </citation>
    <scope>NUCLEOTIDE SEQUENCE [LARGE SCALE GENOMIC DNA]</scope>
    <source>
        <strain>ATCC 29413 / PCC 7937</strain>
    </source>
</reference>